<gene>
    <name evidence="1" type="primary">lpqB</name>
    <name type="ordered locus">RHA1_ro06326</name>
</gene>
<accession>Q0S2Y3</accession>
<name>LPQB_RHOJR</name>
<organism>
    <name type="scientific">Rhodococcus jostii (strain RHA1)</name>
    <dbReference type="NCBI Taxonomy" id="101510"/>
    <lineage>
        <taxon>Bacteria</taxon>
        <taxon>Bacillati</taxon>
        <taxon>Actinomycetota</taxon>
        <taxon>Actinomycetes</taxon>
        <taxon>Mycobacteriales</taxon>
        <taxon>Nocardiaceae</taxon>
        <taxon>Rhodococcus</taxon>
    </lineage>
</organism>
<dbReference type="EMBL" id="CP000431">
    <property type="protein sequence ID" value="ABG98103.1"/>
    <property type="molecule type" value="Genomic_DNA"/>
</dbReference>
<dbReference type="RefSeq" id="WP_009479530.1">
    <property type="nucleotide sequence ID" value="NC_008268.1"/>
</dbReference>
<dbReference type="SMR" id="Q0S2Y3"/>
<dbReference type="KEGG" id="rha:RHA1_ro06326"/>
<dbReference type="eggNOG" id="COG5401">
    <property type="taxonomic scope" value="Bacteria"/>
</dbReference>
<dbReference type="HOGENOM" id="CLU_032207_1_0_11"/>
<dbReference type="OrthoDB" id="3226781at2"/>
<dbReference type="Proteomes" id="UP000008710">
    <property type="component" value="Chromosome"/>
</dbReference>
<dbReference type="GO" id="GO:0005886">
    <property type="term" value="C:plasma membrane"/>
    <property type="evidence" value="ECO:0007669"/>
    <property type="project" value="UniProtKB-SubCell"/>
</dbReference>
<dbReference type="HAMAP" id="MF_01373">
    <property type="entry name" value="LpqB_lipoprot"/>
    <property type="match status" value="1"/>
</dbReference>
<dbReference type="InterPro" id="IPR019606">
    <property type="entry name" value="GerMN"/>
</dbReference>
<dbReference type="InterPro" id="IPR023959">
    <property type="entry name" value="Lipoprotein_LpqB"/>
</dbReference>
<dbReference type="InterPro" id="IPR018910">
    <property type="entry name" value="Lipoprotein_LpqB_C"/>
</dbReference>
<dbReference type="InterPro" id="IPR011044">
    <property type="entry name" value="Quino_amine_DH_bsu"/>
</dbReference>
<dbReference type="NCBIfam" id="NF010141">
    <property type="entry name" value="PRK13616.1"/>
    <property type="match status" value="1"/>
</dbReference>
<dbReference type="Pfam" id="PF10646">
    <property type="entry name" value="Germane"/>
    <property type="match status" value="1"/>
</dbReference>
<dbReference type="Pfam" id="PF10647">
    <property type="entry name" value="Gmad1"/>
    <property type="match status" value="1"/>
</dbReference>
<dbReference type="SMART" id="SM00909">
    <property type="entry name" value="Germane"/>
    <property type="match status" value="1"/>
</dbReference>
<dbReference type="SUPFAM" id="SSF50969">
    <property type="entry name" value="YVTN repeat-like/Quinoprotein amine dehydrogenase"/>
    <property type="match status" value="1"/>
</dbReference>
<dbReference type="PROSITE" id="PS51257">
    <property type="entry name" value="PROKAR_LIPOPROTEIN"/>
    <property type="match status" value="1"/>
</dbReference>
<feature type="signal peptide" evidence="1">
    <location>
        <begin position="1"/>
        <end position="28"/>
    </location>
</feature>
<feature type="chain" id="PRO_0000286728" description="Lipoprotein LpqB">
    <location>
        <begin position="29"/>
        <end position="597"/>
    </location>
</feature>
<feature type="region of interest" description="Disordered" evidence="2">
    <location>
        <begin position="38"/>
        <end position="58"/>
    </location>
</feature>
<feature type="compositionally biased region" description="Polar residues" evidence="2">
    <location>
        <begin position="38"/>
        <end position="51"/>
    </location>
</feature>
<feature type="lipid moiety-binding region" description="N-palmitoyl cysteine" evidence="1">
    <location>
        <position position="29"/>
    </location>
</feature>
<feature type="lipid moiety-binding region" description="S-diacylglycerol cysteine" evidence="1">
    <location>
        <position position="29"/>
    </location>
</feature>
<comment type="subcellular location">
    <subcellularLocation>
        <location evidence="1">Cell membrane</location>
        <topology evidence="1">Lipid-anchor</topology>
    </subcellularLocation>
</comment>
<comment type="similarity">
    <text evidence="1">Belongs to the LpqB lipoprotein family.</text>
</comment>
<keyword id="KW-1003">Cell membrane</keyword>
<keyword id="KW-0449">Lipoprotein</keyword>
<keyword id="KW-0472">Membrane</keyword>
<keyword id="KW-0564">Palmitate</keyword>
<keyword id="KW-0732">Signal</keyword>
<proteinExistence type="inferred from homology"/>
<evidence type="ECO:0000255" key="1">
    <source>
        <dbReference type="HAMAP-Rule" id="MF_01373"/>
    </source>
</evidence>
<evidence type="ECO:0000256" key="2">
    <source>
        <dbReference type="SAM" id="MobiDB-lite"/>
    </source>
</evidence>
<sequence>MTPGRRSALLSRSVCGAIVLAVLVTVSGCASLPDSSTPQAIGTINRDSPGSSVAAPAPGREPDLLLRDFFKASTDPSNRHLAARQFLTPGVSGRWDDAASATIVDKVDVLPETRSADQATYTIRANKVGQLEPGGLYVAEEGSFETKISLELQGGEWRISELPAGVILDRAQFLNTYQRKSLYFLDPAGTTVVPDPRWVSGAQDQMASQLIGLLIDGPKAALAPAVRNELGDGVSVRGPITKADGRTAQVGVGLGGIRIDFAGVPPMDAQAKQLFAAQVIWTLANAEISGPYVLLADGEPFDERFPNGWTTADVASMNPFATSSATVGLHALREGSMVSVTETGVTPVPGYFGSARNMRSLALSQDGKLVAAVADTGRPAPEPASSLMVGAYEDGAASVLEGGAITRPTWAPDNSAIWAAVNGNTVIRVLREPGTGRTSVVNVDAGAVTALGATITELRLSRDGVRAALIVDGKVYLAIVTQMPGGEYALTNPRAVAIGLGSPALSLDWSTSDTIVVARAASDIPVVQVAVDGSRMDALPSRNLTAPVVAVDASTTTEFVADSRAVFQLNNNDPAGDRYWREVPGLTGVKAIPVLPG</sequence>
<protein>
    <recommendedName>
        <fullName evidence="1">Lipoprotein LpqB</fullName>
    </recommendedName>
</protein>
<reference key="1">
    <citation type="journal article" date="2006" name="Proc. Natl. Acad. Sci. U.S.A.">
        <title>The complete genome of Rhodococcus sp. RHA1 provides insights into a catabolic powerhouse.</title>
        <authorList>
            <person name="McLeod M.P."/>
            <person name="Warren R.L."/>
            <person name="Hsiao W.W.L."/>
            <person name="Araki N."/>
            <person name="Myhre M."/>
            <person name="Fernandes C."/>
            <person name="Miyazawa D."/>
            <person name="Wong W."/>
            <person name="Lillquist A.L."/>
            <person name="Wang D."/>
            <person name="Dosanjh M."/>
            <person name="Hara H."/>
            <person name="Petrescu A."/>
            <person name="Morin R.D."/>
            <person name="Yang G."/>
            <person name="Stott J.M."/>
            <person name="Schein J.E."/>
            <person name="Shin H."/>
            <person name="Smailus D."/>
            <person name="Siddiqui A.S."/>
            <person name="Marra M.A."/>
            <person name="Jones S.J.M."/>
            <person name="Holt R."/>
            <person name="Brinkman F.S.L."/>
            <person name="Miyauchi K."/>
            <person name="Fukuda M."/>
            <person name="Davies J.E."/>
            <person name="Mohn W.W."/>
            <person name="Eltis L.D."/>
        </authorList>
    </citation>
    <scope>NUCLEOTIDE SEQUENCE [LARGE SCALE GENOMIC DNA]</scope>
    <source>
        <strain>RHA1</strain>
    </source>
</reference>